<name>RL19_SHISS</name>
<proteinExistence type="inferred from homology"/>
<organism>
    <name type="scientific">Shigella sonnei (strain Ss046)</name>
    <dbReference type="NCBI Taxonomy" id="300269"/>
    <lineage>
        <taxon>Bacteria</taxon>
        <taxon>Pseudomonadati</taxon>
        <taxon>Pseudomonadota</taxon>
        <taxon>Gammaproteobacteria</taxon>
        <taxon>Enterobacterales</taxon>
        <taxon>Enterobacteriaceae</taxon>
        <taxon>Shigella</taxon>
    </lineage>
</organism>
<accession>Q3YYN2</accession>
<keyword id="KW-1185">Reference proteome</keyword>
<keyword id="KW-0687">Ribonucleoprotein</keyword>
<keyword id="KW-0689">Ribosomal protein</keyword>
<feature type="chain" id="PRO_0000226873" description="Large ribosomal subunit protein bL19">
    <location>
        <begin position="1"/>
        <end position="115"/>
    </location>
</feature>
<reference key="1">
    <citation type="journal article" date="2005" name="Nucleic Acids Res.">
        <title>Genome dynamics and diversity of Shigella species, the etiologic agents of bacillary dysentery.</title>
        <authorList>
            <person name="Yang F."/>
            <person name="Yang J."/>
            <person name="Zhang X."/>
            <person name="Chen L."/>
            <person name="Jiang Y."/>
            <person name="Yan Y."/>
            <person name="Tang X."/>
            <person name="Wang J."/>
            <person name="Xiong Z."/>
            <person name="Dong J."/>
            <person name="Xue Y."/>
            <person name="Zhu Y."/>
            <person name="Xu X."/>
            <person name="Sun L."/>
            <person name="Chen S."/>
            <person name="Nie H."/>
            <person name="Peng J."/>
            <person name="Xu J."/>
            <person name="Wang Y."/>
            <person name="Yuan Z."/>
            <person name="Wen Y."/>
            <person name="Yao Z."/>
            <person name="Shen Y."/>
            <person name="Qiang B."/>
            <person name="Hou Y."/>
            <person name="Yu J."/>
            <person name="Jin Q."/>
        </authorList>
    </citation>
    <scope>NUCLEOTIDE SEQUENCE [LARGE SCALE GENOMIC DNA]</scope>
    <source>
        <strain>Ss046</strain>
    </source>
</reference>
<gene>
    <name evidence="1" type="primary">rplS</name>
    <name type="ordered locus">SSON_2763</name>
</gene>
<dbReference type="EMBL" id="CP000038">
    <property type="protein sequence ID" value="AAZ89380.1"/>
    <property type="molecule type" value="Genomic_DNA"/>
</dbReference>
<dbReference type="RefSeq" id="WP_000065253.1">
    <property type="nucleotide sequence ID" value="NC_007384.1"/>
</dbReference>
<dbReference type="SMR" id="Q3YYN2"/>
<dbReference type="GeneID" id="93774456"/>
<dbReference type="KEGG" id="ssn:SSON_2763"/>
<dbReference type="HOGENOM" id="CLU_103507_2_1_6"/>
<dbReference type="Proteomes" id="UP000002529">
    <property type="component" value="Chromosome"/>
</dbReference>
<dbReference type="GO" id="GO:0022625">
    <property type="term" value="C:cytosolic large ribosomal subunit"/>
    <property type="evidence" value="ECO:0007669"/>
    <property type="project" value="TreeGrafter"/>
</dbReference>
<dbReference type="GO" id="GO:0003735">
    <property type="term" value="F:structural constituent of ribosome"/>
    <property type="evidence" value="ECO:0007669"/>
    <property type="project" value="InterPro"/>
</dbReference>
<dbReference type="GO" id="GO:0006412">
    <property type="term" value="P:translation"/>
    <property type="evidence" value="ECO:0007669"/>
    <property type="project" value="UniProtKB-UniRule"/>
</dbReference>
<dbReference type="FunFam" id="2.30.30.790:FF:000001">
    <property type="entry name" value="50S ribosomal protein L19"/>
    <property type="match status" value="1"/>
</dbReference>
<dbReference type="Gene3D" id="2.30.30.790">
    <property type="match status" value="1"/>
</dbReference>
<dbReference type="HAMAP" id="MF_00402">
    <property type="entry name" value="Ribosomal_bL19"/>
    <property type="match status" value="1"/>
</dbReference>
<dbReference type="InterPro" id="IPR001857">
    <property type="entry name" value="Ribosomal_bL19"/>
</dbReference>
<dbReference type="InterPro" id="IPR018257">
    <property type="entry name" value="Ribosomal_bL19_CS"/>
</dbReference>
<dbReference type="InterPro" id="IPR038657">
    <property type="entry name" value="Ribosomal_bL19_sf"/>
</dbReference>
<dbReference type="InterPro" id="IPR008991">
    <property type="entry name" value="Translation_prot_SH3-like_sf"/>
</dbReference>
<dbReference type="NCBIfam" id="TIGR01024">
    <property type="entry name" value="rplS_bact"/>
    <property type="match status" value="1"/>
</dbReference>
<dbReference type="PANTHER" id="PTHR15680:SF9">
    <property type="entry name" value="LARGE RIBOSOMAL SUBUNIT PROTEIN BL19M"/>
    <property type="match status" value="1"/>
</dbReference>
<dbReference type="PANTHER" id="PTHR15680">
    <property type="entry name" value="RIBOSOMAL PROTEIN L19"/>
    <property type="match status" value="1"/>
</dbReference>
<dbReference type="Pfam" id="PF01245">
    <property type="entry name" value="Ribosomal_L19"/>
    <property type="match status" value="1"/>
</dbReference>
<dbReference type="PIRSF" id="PIRSF002191">
    <property type="entry name" value="Ribosomal_L19"/>
    <property type="match status" value="1"/>
</dbReference>
<dbReference type="PRINTS" id="PR00061">
    <property type="entry name" value="RIBOSOMALL19"/>
</dbReference>
<dbReference type="SUPFAM" id="SSF50104">
    <property type="entry name" value="Translation proteins SH3-like domain"/>
    <property type="match status" value="1"/>
</dbReference>
<dbReference type="PROSITE" id="PS01015">
    <property type="entry name" value="RIBOSOMAL_L19"/>
    <property type="match status" value="1"/>
</dbReference>
<comment type="function">
    <text evidence="1">This protein is located at the 30S-50S ribosomal subunit interface and may play a role in the structure and function of the aminoacyl-tRNA binding site.</text>
</comment>
<comment type="similarity">
    <text evidence="1">Belongs to the bacterial ribosomal protein bL19 family.</text>
</comment>
<evidence type="ECO:0000255" key="1">
    <source>
        <dbReference type="HAMAP-Rule" id="MF_00402"/>
    </source>
</evidence>
<evidence type="ECO:0000305" key="2"/>
<protein>
    <recommendedName>
        <fullName evidence="1">Large ribosomal subunit protein bL19</fullName>
    </recommendedName>
    <alternativeName>
        <fullName evidence="2">50S ribosomal protein L19</fullName>
    </alternativeName>
</protein>
<sequence>MSNIIKQLEQEQMKQDVPSFRPGDTVEVKVWVVEGSKKRLQAFEGVVIAIRNRGLHSAFTVRKISNGEGVERVFQTHSPVVDSISVKRRGAVRKAKLYYLRERTGKAARIKERLN</sequence>